<accession>B0B961</accession>
<reference key="1">
    <citation type="journal article" date="2008" name="Genome Res.">
        <title>Chlamydia trachomatis: genome sequence analysis of lymphogranuloma venereum isolates.</title>
        <authorList>
            <person name="Thomson N.R."/>
            <person name="Holden M.T.G."/>
            <person name="Carder C."/>
            <person name="Lennard N."/>
            <person name="Lockey S.J."/>
            <person name="Marsh P."/>
            <person name="Skipp P."/>
            <person name="O'Connor C.D."/>
            <person name="Goodhead I."/>
            <person name="Norbertzcak H."/>
            <person name="Harris B."/>
            <person name="Ormond D."/>
            <person name="Rance R."/>
            <person name="Quail M.A."/>
            <person name="Parkhill J."/>
            <person name="Stephens R.S."/>
            <person name="Clarke I.N."/>
        </authorList>
    </citation>
    <scope>NUCLEOTIDE SEQUENCE [LARGE SCALE GENOMIC DNA]</scope>
    <source>
        <strain>ATCC VR-902B / DSM 19102 / 434/Bu</strain>
    </source>
</reference>
<proteinExistence type="inferred from homology"/>
<gene>
    <name evidence="1" type="primary">nusB</name>
    <name type="ordered locus">CTL0204</name>
</gene>
<dbReference type="EMBL" id="AM884176">
    <property type="protein sequence ID" value="CAP03648.1"/>
    <property type="molecule type" value="Genomic_DNA"/>
</dbReference>
<dbReference type="RefSeq" id="WP_009873443.1">
    <property type="nucleotide sequence ID" value="NC_010287.1"/>
</dbReference>
<dbReference type="RefSeq" id="YP_001654294.1">
    <property type="nucleotide sequence ID" value="NC_010287.1"/>
</dbReference>
<dbReference type="SMR" id="B0B961"/>
<dbReference type="KEGG" id="ctb:CTL0204"/>
<dbReference type="PATRIC" id="fig|471472.4.peg.221"/>
<dbReference type="HOGENOM" id="CLU_087843_3_3_0"/>
<dbReference type="Proteomes" id="UP001154402">
    <property type="component" value="Chromosome"/>
</dbReference>
<dbReference type="GO" id="GO:0005829">
    <property type="term" value="C:cytosol"/>
    <property type="evidence" value="ECO:0007669"/>
    <property type="project" value="TreeGrafter"/>
</dbReference>
<dbReference type="GO" id="GO:0003723">
    <property type="term" value="F:RNA binding"/>
    <property type="evidence" value="ECO:0007669"/>
    <property type="project" value="UniProtKB-UniRule"/>
</dbReference>
<dbReference type="GO" id="GO:0006353">
    <property type="term" value="P:DNA-templated transcription termination"/>
    <property type="evidence" value="ECO:0007669"/>
    <property type="project" value="UniProtKB-UniRule"/>
</dbReference>
<dbReference type="GO" id="GO:0031564">
    <property type="term" value="P:transcription antitermination"/>
    <property type="evidence" value="ECO:0007669"/>
    <property type="project" value="UniProtKB-KW"/>
</dbReference>
<dbReference type="CDD" id="cd00619">
    <property type="entry name" value="Terminator_NusB"/>
    <property type="match status" value="1"/>
</dbReference>
<dbReference type="Gene3D" id="1.10.940.10">
    <property type="entry name" value="NusB-like"/>
    <property type="match status" value="1"/>
</dbReference>
<dbReference type="HAMAP" id="MF_00073">
    <property type="entry name" value="NusB"/>
    <property type="match status" value="1"/>
</dbReference>
<dbReference type="InterPro" id="IPR035926">
    <property type="entry name" value="NusB-like_sf"/>
</dbReference>
<dbReference type="InterPro" id="IPR011605">
    <property type="entry name" value="NusB_fam"/>
</dbReference>
<dbReference type="InterPro" id="IPR006027">
    <property type="entry name" value="NusB_RsmB_TIM44"/>
</dbReference>
<dbReference type="NCBIfam" id="TIGR01951">
    <property type="entry name" value="nusB"/>
    <property type="match status" value="1"/>
</dbReference>
<dbReference type="NCBIfam" id="NF001230">
    <property type="entry name" value="PRK00202.2-5"/>
    <property type="match status" value="1"/>
</dbReference>
<dbReference type="PANTHER" id="PTHR11078:SF3">
    <property type="entry name" value="ANTITERMINATION NUSB DOMAIN-CONTAINING PROTEIN"/>
    <property type="match status" value="1"/>
</dbReference>
<dbReference type="PANTHER" id="PTHR11078">
    <property type="entry name" value="N UTILIZATION SUBSTANCE PROTEIN B-RELATED"/>
    <property type="match status" value="1"/>
</dbReference>
<dbReference type="Pfam" id="PF01029">
    <property type="entry name" value="NusB"/>
    <property type="match status" value="1"/>
</dbReference>
<dbReference type="SUPFAM" id="SSF48013">
    <property type="entry name" value="NusB-like"/>
    <property type="match status" value="1"/>
</dbReference>
<evidence type="ECO:0000255" key="1">
    <source>
        <dbReference type="HAMAP-Rule" id="MF_00073"/>
    </source>
</evidence>
<sequence length="168" mass="18451">MSVMASDKACAPVRASRPFPKQKLRELVLQALYALEIDPEGEDSLVSLLMTEASVSKKNAAYALMFCRAIRANQPDLDALLDATIRTTTLARLTIIERNILRMMLFEHQQNQDCCPVPVAVLIAETTRLIKKFSYSEGSSLILAVLGSIFDHPAPALDTPLEPTSMCG</sequence>
<keyword id="KW-0694">RNA-binding</keyword>
<keyword id="KW-0804">Transcription</keyword>
<keyword id="KW-0889">Transcription antitermination</keyword>
<keyword id="KW-0805">Transcription regulation</keyword>
<organism>
    <name type="scientific">Chlamydia trachomatis serovar L2 (strain ATCC VR-902B / DSM 19102 / 434/Bu)</name>
    <dbReference type="NCBI Taxonomy" id="471472"/>
    <lineage>
        <taxon>Bacteria</taxon>
        <taxon>Pseudomonadati</taxon>
        <taxon>Chlamydiota</taxon>
        <taxon>Chlamydiia</taxon>
        <taxon>Chlamydiales</taxon>
        <taxon>Chlamydiaceae</taxon>
        <taxon>Chlamydia/Chlamydophila group</taxon>
        <taxon>Chlamydia</taxon>
    </lineage>
</organism>
<comment type="function">
    <text evidence="1">Involved in transcription antitermination. Required for transcription of ribosomal RNA (rRNA) genes. Binds specifically to the boxA antiterminator sequence of the ribosomal RNA (rrn) operons.</text>
</comment>
<comment type="similarity">
    <text evidence="1">Belongs to the NusB family.</text>
</comment>
<name>NUSB_CHLT2</name>
<protein>
    <recommendedName>
        <fullName evidence="1">Transcription antitermination protein NusB</fullName>
    </recommendedName>
    <alternativeName>
        <fullName evidence="1">Antitermination factor NusB</fullName>
    </alternativeName>
</protein>
<feature type="chain" id="PRO_1000092538" description="Transcription antitermination protein NusB">
    <location>
        <begin position="1"/>
        <end position="168"/>
    </location>
</feature>